<keyword id="KW-0002">3D-structure</keyword>
<keyword id="KW-0007">Acetylation</keyword>
<keyword id="KW-0010">Activator</keyword>
<keyword id="KW-0225">Disease variant</keyword>
<keyword id="KW-0238">DNA-binding</keyword>
<keyword id="KW-1017">Isopeptide bond</keyword>
<keyword id="KW-0446">Lipid-binding</keyword>
<keyword id="KW-0479">Metal-binding</keyword>
<keyword id="KW-0539">Nucleus</keyword>
<keyword id="KW-0597">Phosphoprotein</keyword>
<keyword id="KW-1066">Premature ovarian failure</keyword>
<keyword id="KW-1267">Proteomics identification</keyword>
<keyword id="KW-0675">Receptor</keyword>
<keyword id="KW-1185">Reference proteome</keyword>
<keyword id="KW-0804">Transcription</keyword>
<keyword id="KW-0805">Transcription regulation</keyword>
<keyword id="KW-0832">Ubl conjugation</keyword>
<keyword id="KW-0862">Zinc</keyword>
<keyword id="KW-0863">Zinc-finger</keyword>
<comment type="function">
    <text evidence="1 15 24 28">Transcriptional activator. Essential for sexual differentiation and formation of the primary steroidogenic tissues (PubMed:27378692). Binds to the Ad4 site found in the promoter region of steroidogenic P450 genes such as CYP11A, CYP11B and CYP21B. Also regulates the AMH/Muellerian inhibiting substance gene as well as the AHCH and STAR genes. 5'-YCAAGGYC-3' and 5'-RRAGGTCA-3' are the consensus sequences for the recognition by NR5A1 (PubMed:27378692). The SFPQ-NONO-NR5A1 complex binds to the CYP17 promoter and regulates basal and cAMP-dependent transcriptional activity. Binds phosphatidylcholine (By similarity). Binds phospholipids with a phosphatidylinositol (PI) headgroup, in particular PI(3,4)P2 and PI(3,4,5)P3. Activated by the phosphorylation of NR5A1 by HIPK3 leading to increased steroidogenic gene expression upon cAMP signaling pathway stimulation.</text>
</comment>
<comment type="subunit">
    <text evidence="1 9 12 13 15 16 18">Binds DNA as a monomer. Interacts with NR0B2 and PPARGC1A (By similarity). Part of a complex consisting of SFPQ, NONO and NR5A1. Interacts with NCOA2. Interacts with DGKQ and CDK7. Binds to and activated by HIPK3.</text>
</comment>
<comment type="interaction">
    <interactant intactId="EBI-874629">
        <id>Q13285</id>
    </interactant>
    <interactant intactId="EBI-714581">
        <id>Q13510</id>
        <label>ASAH1</label>
    </interactant>
    <organismsDiffer>false</organismsDiffer>
    <experiments>4</experiments>
</comment>
<comment type="interaction">
    <interactant intactId="EBI-874629">
        <id>Q13285</id>
    </interactant>
    <interactant intactId="EBI-21572613">
        <id>Q13510-2</id>
        <label>ASAH1</label>
    </interactant>
    <organismsDiffer>false</organismsDiffer>
    <experiments>3</experiments>
</comment>
<comment type="interaction">
    <interactant intactId="EBI-874629">
        <id>Q13285</id>
    </interactant>
    <interactant intactId="EBI-739879">
        <id>Q53TS8</id>
        <label>C2CD6</label>
    </interactant>
    <organismsDiffer>false</organismsDiffer>
    <experiments>3</experiments>
</comment>
<comment type="interaction">
    <interactant intactId="EBI-874629">
        <id>Q13285</id>
    </interactant>
    <interactant intactId="EBI-456371">
        <id>P61024</id>
        <label>CKS1B</label>
    </interactant>
    <organismsDiffer>false</organismsDiffer>
    <experiments>3</experiments>
</comment>
<comment type="interaction">
    <interactant intactId="EBI-874629">
        <id>Q13285</id>
    </interactant>
    <interactant intactId="EBI-389883">
        <id>P16333</id>
        <label>NCK1</label>
    </interactant>
    <organismsDiffer>false</organismsDiffer>
    <experiments>2</experiments>
</comment>
<comment type="interaction">
    <interactant intactId="EBI-874629">
        <id>Q13285</id>
    </interactant>
    <interactant intactId="EBI-713635">
        <id>O43639</id>
        <label>NCK2</label>
    </interactant>
    <organismsDiffer>false</organismsDiffer>
    <experiments>3</experiments>
</comment>
<comment type="interaction">
    <interactant intactId="EBI-874629">
        <id>Q13285</id>
    </interactant>
    <interactant intactId="EBI-946109">
        <id>P51843</id>
        <label>NR0B1</label>
    </interactant>
    <organismsDiffer>false</organismsDiffer>
    <experiments>9</experiments>
</comment>
<comment type="interaction">
    <interactant intactId="EBI-874629">
        <id>Q13285</id>
    </interactant>
    <interactant intactId="EBI-741158">
        <id>Q96HA8</id>
        <label>NTAQ1</label>
    </interactant>
    <organismsDiffer>false</organismsDiffer>
    <experiments>3</experiments>
</comment>
<comment type="interaction">
    <interactant intactId="EBI-874629">
        <id>Q13285</id>
    </interactant>
    <interactant intactId="EBI-712376">
        <id>P40937</id>
        <label>RFC5</label>
    </interactant>
    <organismsDiffer>false</organismsDiffer>
    <experiments>3</experiments>
</comment>
<comment type="interaction">
    <interactant intactId="EBI-874629">
        <id>Q13285</id>
    </interactant>
    <interactant intactId="EBI-750487">
        <id>Q8WW24</id>
        <label>TEKT4</label>
    </interactant>
    <organismsDiffer>false</organismsDiffer>
    <experiments>3</experiments>
</comment>
<comment type="subcellular location">
    <subcellularLocation>
        <location evidence="2 8 25">Nucleus</location>
    </subcellularLocation>
</comment>
<comment type="tissue specificity">
    <text evidence="29">High expressed in the adrenal cortex, the ovary, the testis, and the spleen (PubMed:9177385).</text>
</comment>
<comment type="PTM">
    <text evidence="8">Acetylation stimulates the transcriptional activity.</text>
</comment>
<comment type="PTM">
    <text evidence="11 19">Sumoylation reduces CDK7-mediated phosphorylation on Ser-203.</text>
</comment>
<comment type="PTM">
    <text evidence="5 18 19">Phosphorylated on Ser-203 by CDK7. This phosphorylation promotes transcriptional activity.</text>
</comment>
<comment type="disease" evidence="6 10 14 17 22 24 25 28">
    <disease id="DI-02465">
        <name>46,XY sex reversal 3</name>
        <acronym>SRXY3</acronym>
        <description>A condition characterized by male-to-female sex reversal in the presence of a normal 46,XY karyotype.</description>
        <dbReference type="MIM" id="612965"/>
    </disease>
    <text>The disease is caused by variants affecting the gene represented in this entry.</text>
</comment>
<comment type="disease" evidence="24 25 26 27">
    <disease id="DI-05002">
        <name>46,XX sex reversal 4</name>
        <acronym>SRXX4</acronym>
        <description>A condition in which male gonads develop in a genetic female (female to male sex reversal).</description>
        <dbReference type="MIM" id="617480"/>
    </disease>
    <text>The disease is caused by variants affecting the gene represented in this entry.</text>
</comment>
<comment type="disease" evidence="7 23">
    <disease id="DI-05003">
        <name>Adrenal insufficiency, NR5A1-related</name>
        <acronym>AINR</acronym>
        <description>A disorder characterized by adrenal insufficiency, muscular hypotonia, decreased sodium and increased potassium levels, elevated ACTH, salt-wasting crisis, prolonged jaundice, hypoglycemia, and vomiting.</description>
        <dbReference type="MIM" id="612964"/>
    </disease>
    <text>The disease is caused by variants affecting the gene represented in this entry.</text>
</comment>
<comment type="disease" evidence="20">
    <disease id="DI-02517">
        <name>Premature ovarian failure 7</name>
        <acronym>POF7</acronym>
        <description>An ovarian disorder defined as the cessation of ovarian function under the age of 40 years. It is characterized by oligomenorrhea or amenorrhea, in the presence of elevated levels of serum gonadotropins and low estradiol.</description>
        <dbReference type="MIM" id="612964"/>
    </disease>
    <text>The disease is caused by variants affecting the gene represented in this entry.</text>
</comment>
<comment type="disease" evidence="21">
    <disease id="DI-03124">
        <name>Spermatogenic failure 8</name>
        <acronym>SPGF8</acronym>
        <description>An infertility disorder characterized by spermatogenesis failure and severe oligozoospermia.</description>
        <dbReference type="MIM" id="613957"/>
    </disease>
    <text>The disease is caused by variants affecting the gene represented in this entry.</text>
</comment>
<comment type="similarity">
    <text evidence="31">Belongs to the nuclear hormone receptor family. NR5 subfamily.</text>
</comment>
<accession>Q13285</accession>
<accession>O15196</accession>
<accession>Q5T6F5</accession>
<gene>
    <name type="primary">NR5A1</name>
    <name type="synonym">AD4BP</name>
    <name type="synonym">FTZF1</name>
    <name type="synonym">SF1</name>
</gene>
<evidence type="ECO:0000250" key="1">
    <source>
        <dbReference type="UniProtKB" id="P33242"/>
    </source>
</evidence>
<evidence type="ECO:0000255" key="2">
    <source>
        <dbReference type="PROSITE-ProRule" id="PRU00407"/>
    </source>
</evidence>
<evidence type="ECO:0000255" key="3">
    <source>
        <dbReference type="PROSITE-ProRule" id="PRU01189"/>
    </source>
</evidence>
<evidence type="ECO:0000256" key="4">
    <source>
        <dbReference type="SAM" id="MobiDB-lite"/>
    </source>
</evidence>
<evidence type="ECO:0000269" key="5">
    <source>
    </source>
</evidence>
<evidence type="ECO:0000269" key="6">
    <source>
    </source>
</evidence>
<evidence type="ECO:0000269" key="7">
    <source>
    </source>
</evidence>
<evidence type="ECO:0000269" key="8">
    <source>
    </source>
</evidence>
<evidence type="ECO:0000269" key="9">
    <source>
    </source>
</evidence>
<evidence type="ECO:0000269" key="10">
    <source>
    </source>
</evidence>
<evidence type="ECO:0000269" key="11">
    <source>
    </source>
</evidence>
<evidence type="ECO:0000269" key="12">
    <source>
    </source>
</evidence>
<evidence type="ECO:0000269" key="13">
    <source>
    </source>
</evidence>
<evidence type="ECO:0000269" key="14">
    <source>
    </source>
</evidence>
<evidence type="ECO:0000269" key="15">
    <source>
    </source>
</evidence>
<evidence type="ECO:0000269" key="16">
    <source>
    </source>
</evidence>
<evidence type="ECO:0000269" key="17">
    <source>
    </source>
</evidence>
<evidence type="ECO:0000269" key="18">
    <source>
    </source>
</evidence>
<evidence type="ECO:0000269" key="19">
    <source>
    </source>
</evidence>
<evidence type="ECO:0000269" key="20">
    <source>
    </source>
</evidence>
<evidence type="ECO:0000269" key="21">
    <source>
    </source>
</evidence>
<evidence type="ECO:0000269" key="22">
    <source>
    </source>
</evidence>
<evidence type="ECO:0000269" key="23">
    <source>
    </source>
</evidence>
<evidence type="ECO:0000269" key="24">
    <source>
    </source>
</evidence>
<evidence type="ECO:0000269" key="25">
    <source>
    </source>
</evidence>
<evidence type="ECO:0000269" key="26">
    <source>
    </source>
</evidence>
<evidence type="ECO:0000269" key="27">
    <source>
    </source>
</evidence>
<evidence type="ECO:0000269" key="28">
    <source>
    </source>
</evidence>
<evidence type="ECO:0000269" key="29">
    <source>
    </source>
</evidence>
<evidence type="ECO:0000303" key="30">
    <source>
    </source>
</evidence>
<evidence type="ECO:0000305" key="31"/>
<evidence type="ECO:0000305" key="32">
    <source>
    </source>
</evidence>
<evidence type="ECO:0007744" key="33">
    <source>
        <dbReference type="PDB" id="1ZDT"/>
    </source>
</evidence>
<evidence type="ECO:0007829" key="34">
    <source>
        <dbReference type="PDB" id="1YOW"/>
    </source>
</evidence>
<evidence type="ECO:0007829" key="35">
    <source>
        <dbReference type="PDB" id="1ZDT"/>
    </source>
</evidence>
<protein>
    <recommendedName>
        <fullName>Steroidogenic factor 1</fullName>
        <shortName>SF-1</shortName>
        <shortName>STF-1</shortName>
        <shortName evidence="30">hSF-1</shortName>
    </recommendedName>
    <alternativeName>
        <fullName>Adrenal 4-binding protein</fullName>
    </alternativeName>
    <alternativeName>
        <fullName>Fushi tarazu factor homolog 1</fullName>
    </alternativeName>
    <alternativeName>
        <fullName>Nuclear receptor subfamily 5 group A member 1</fullName>
    </alternativeName>
    <alternativeName>
        <fullName>Steroid hormone receptor Ad4BP</fullName>
    </alternativeName>
</protein>
<reference key="1">
    <citation type="journal article" date="1996" name="Biochem. Biophys. Res. Commun.">
        <title>Structural characterization of human Ad4bp (SF-1) gene.</title>
        <authorList>
            <person name="Oba K."/>
            <person name="Yanase T."/>
            <person name="Nomura M."/>
            <person name="Morohashi K."/>
            <person name="Takayanagi R."/>
            <person name="Nawata H."/>
        </authorList>
    </citation>
    <scope>NUCLEOTIDE SEQUENCE [GENOMIC DNA]</scope>
</reference>
<reference key="2">
    <citation type="journal article" date="1996" name="J. Mol. Endocrinol.">
        <title>Cloning and sequence analysis of the human gene encoding steroidogenic factor 1.</title>
        <authorList>
            <person name="Wong M."/>
            <person name="Ramayya M.S."/>
            <person name="Chrousos G.P."/>
            <person name="Driggers P.H."/>
            <person name="Parker K.L."/>
        </authorList>
    </citation>
    <scope>NUCLEOTIDE SEQUENCE [MRNA]</scope>
</reference>
<reference key="3">
    <citation type="submission" date="1997-04" db="EMBL/GenBank/DDBJ databases">
        <title>Cloning and characterization of the human steroidogenic factor 1 (SF-1) cDNA.</title>
        <authorList>
            <person name="Santa Barbara P."/>
            <person name="Desclozeaux M."/>
            <person name="Boizet B."/>
            <person name="Bonneaud N."/>
            <person name="Laudet V."/>
            <person name="Poulat F."/>
            <person name="Berta P."/>
        </authorList>
    </citation>
    <scope>NUCLEOTIDE SEQUENCE [MRNA]</scope>
</reference>
<reference key="4">
    <citation type="journal article" date="2004" name="Nature">
        <title>DNA sequence and analysis of human chromosome 9.</title>
        <authorList>
            <person name="Humphray S.J."/>
            <person name="Oliver K."/>
            <person name="Hunt A.R."/>
            <person name="Plumb R.W."/>
            <person name="Loveland J.E."/>
            <person name="Howe K.L."/>
            <person name="Andrews T.D."/>
            <person name="Searle S."/>
            <person name="Hunt S.E."/>
            <person name="Scott C.E."/>
            <person name="Jones M.C."/>
            <person name="Ainscough R."/>
            <person name="Almeida J.P."/>
            <person name="Ambrose K.D."/>
            <person name="Ashwell R.I.S."/>
            <person name="Babbage A.K."/>
            <person name="Babbage S."/>
            <person name="Bagguley C.L."/>
            <person name="Bailey J."/>
            <person name="Banerjee R."/>
            <person name="Barker D.J."/>
            <person name="Barlow K.F."/>
            <person name="Bates K."/>
            <person name="Beasley H."/>
            <person name="Beasley O."/>
            <person name="Bird C.P."/>
            <person name="Bray-Allen S."/>
            <person name="Brown A.J."/>
            <person name="Brown J.Y."/>
            <person name="Burford D."/>
            <person name="Burrill W."/>
            <person name="Burton J."/>
            <person name="Carder C."/>
            <person name="Carter N.P."/>
            <person name="Chapman J.C."/>
            <person name="Chen Y."/>
            <person name="Clarke G."/>
            <person name="Clark S.Y."/>
            <person name="Clee C.M."/>
            <person name="Clegg S."/>
            <person name="Collier R.E."/>
            <person name="Corby N."/>
            <person name="Crosier M."/>
            <person name="Cummings A.T."/>
            <person name="Davies J."/>
            <person name="Dhami P."/>
            <person name="Dunn M."/>
            <person name="Dutta I."/>
            <person name="Dyer L.W."/>
            <person name="Earthrowl M.E."/>
            <person name="Faulkner L."/>
            <person name="Fleming C.J."/>
            <person name="Frankish A."/>
            <person name="Frankland J.A."/>
            <person name="French L."/>
            <person name="Fricker D.G."/>
            <person name="Garner P."/>
            <person name="Garnett J."/>
            <person name="Ghori J."/>
            <person name="Gilbert J.G.R."/>
            <person name="Glison C."/>
            <person name="Grafham D.V."/>
            <person name="Gribble S."/>
            <person name="Griffiths C."/>
            <person name="Griffiths-Jones S."/>
            <person name="Grocock R."/>
            <person name="Guy J."/>
            <person name="Hall R.E."/>
            <person name="Hammond S."/>
            <person name="Harley J.L."/>
            <person name="Harrison E.S.I."/>
            <person name="Hart E.A."/>
            <person name="Heath P.D."/>
            <person name="Henderson C.D."/>
            <person name="Hopkins B.L."/>
            <person name="Howard P.J."/>
            <person name="Howden P.J."/>
            <person name="Huckle E."/>
            <person name="Johnson C."/>
            <person name="Johnson D."/>
            <person name="Joy A.A."/>
            <person name="Kay M."/>
            <person name="Keenan S."/>
            <person name="Kershaw J.K."/>
            <person name="Kimberley A.M."/>
            <person name="King A."/>
            <person name="Knights A."/>
            <person name="Laird G.K."/>
            <person name="Langford C."/>
            <person name="Lawlor S."/>
            <person name="Leongamornlert D.A."/>
            <person name="Leversha M."/>
            <person name="Lloyd C."/>
            <person name="Lloyd D.M."/>
            <person name="Lovell J."/>
            <person name="Martin S."/>
            <person name="Mashreghi-Mohammadi M."/>
            <person name="Matthews L."/>
            <person name="McLaren S."/>
            <person name="McLay K.E."/>
            <person name="McMurray A."/>
            <person name="Milne S."/>
            <person name="Nickerson T."/>
            <person name="Nisbett J."/>
            <person name="Nordsiek G."/>
            <person name="Pearce A.V."/>
            <person name="Peck A.I."/>
            <person name="Porter K.M."/>
            <person name="Pandian R."/>
            <person name="Pelan S."/>
            <person name="Phillimore B."/>
            <person name="Povey S."/>
            <person name="Ramsey Y."/>
            <person name="Rand V."/>
            <person name="Scharfe M."/>
            <person name="Sehra H.K."/>
            <person name="Shownkeen R."/>
            <person name="Sims S.K."/>
            <person name="Skuce C.D."/>
            <person name="Smith M."/>
            <person name="Steward C.A."/>
            <person name="Swarbreck D."/>
            <person name="Sycamore N."/>
            <person name="Tester J."/>
            <person name="Thorpe A."/>
            <person name="Tracey A."/>
            <person name="Tromans A."/>
            <person name="Thomas D.W."/>
            <person name="Wall M."/>
            <person name="Wallis J.M."/>
            <person name="West A.P."/>
            <person name="Whitehead S.L."/>
            <person name="Willey D.L."/>
            <person name="Williams S.A."/>
            <person name="Wilming L."/>
            <person name="Wray P.W."/>
            <person name="Young L."/>
            <person name="Ashurst J.L."/>
            <person name="Coulson A."/>
            <person name="Blocker H."/>
            <person name="Durbin R.M."/>
            <person name="Sulston J.E."/>
            <person name="Hubbard T."/>
            <person name="Jackson M.J."/>
            <person name="Bentley D.R."/>
            <person name="Beck S."/>
            <person name="Rogers J."/>
            <person name="Dunham I."/>
        </authorList>
    </citation>
    <scope>NUCLEOTIDE SEQUENCE [LARGE SCALE GENOMIC DNA]</scope>
</reference>
<reference key="5">
    <citation type="submission" date="2005-07" db="EMBL/GenBank/DDBJ databases">
        <authorList>
            <person name="Mural R.J."/>
            <person name="Istrail S."/>
            <person name="Sutton G.G."/>
            <person name="Florea L."/>
            <person name="Halpern A.L."/>
            <person name="Mobarry C.M."/>
            <person name="Lippert R."/>
            <person name="Walenz B."/>
            <person name="Shatkay H."/>
            <person name="Dew I."/>
            <person name="Miller J.R."/>
            <person name="Flanigan M.J."/>
            <person name="Edwards N.J."/>
            <person name="Bolanos R."/>
            <person name="Fasulo D."/>
            <person name="Halldorsson B.V."/>
            <person name="Hannenhalli S."/>
            <person name="Turner R."/>
            <person name="Yooseph S."/>
            <person name="Lu F."/>
            <person name="Nusskern D.R."/>
            <person name="Shue B.C."/>
            <person name="Zheng X.H."/>
            <person name="Zhong F."/>
            <person name="Delcher A.L."/>
            <person name="Huson D.H."/>
            <person name="Kravitz S.A."/>
            <person name="Mouchard L."/>
            <person name="Reinert K."/>
            <person name="Remington K.A."/>
            <person name="Clark A.G."/>
            <person name="Waterman M.S."/>
            <person name="Eichler E.E."/>
            <person name="Adams M.D."/>
            <person name="Hunkapiller M.W."/>
            <person name="Myers E.W."/>
            <person name="Venter J.C."/>
        </authorList>
    </citation>
    <scope>NUCLEOTIDE SEQUENCE [LARGE SCALE GENOMIC DNA]</scope>
</reference>
<reference key="6">
    <citation type="journal article" date="2004" name="Genome Res.">
        <title>The status, quality, and expansion of the NIH full-length cDNA project: the Mammalian Gene Collection (MGC).</title>
        <authorList>
            <consortium name="The MGC Project Team"/>
        </authorList>
    </citation>
    <scope>NUCLEOTIDE SEQUENCE [LARGE SCALE MRNA]</scope>
    <source>
        <tissue>Pancreas</tissue>
        <tissue>Spleen</tissue>
    </source>
</reference>
<reference key="7">
    <citation type="submission" date="1995-07" db="EMBL/GenBank/DDBJ databases">
        <title>Human SF1 genomic segment.</title>
        <authorList>
            <person name="Yeh J.R."/>
            <person name="Chung B.C."/>
        </authorList>
    </citation>
    <scope>NUCLEOTIDE SEQUENCE [GENOMIC DNA] OF 20-75</scope>
</reference>
<reference key="8">
    <citation type="journal article" date="1997" name="J. Clin. Endocrinol. Metab.">
        <title>Steroidogenic factor 1 messenger ribonucleic acid expression in steroidogenic and nonsteroidogenic human tissues: Northern blot and in situ hybridization studies.</title>
        <authorList>
            <person name="Ramayya M.S."/>
            <person name="Zhou J."/>
            <person name="Kino T."/>
            <person name="Segars J.H."/>
            <person name="Bondy C.A."/>
            <person name="Chrousos G.P."/>
        </authorList>
    </citation>
    <scope>TISSUE SPECIFICITY</scope>
</reference>
<reference key="9">
    <citation type="journal article" date="1999" name="Mol. Cell">
        <title>Phosphorylation of the nuclear receptor SF-1 modulates cofactor recruitment: integration of hormone signaling in reproduction and stress.</title>
        <authorList>
            <person name="Hammer G.D."/>
            <person name="Krylova I."/>
            <person name="Zhang Y."/>
            <person name="Darimont B.D."/>
            <person name="Simpson K."/>
            <person name="Weigel N.L."/>
            <person name="Ingraham H.A."/>
        </authorList>
    </citation>
    <scope>PHOSPHORYLATION AT SER-203</scope>
</reference>
<reference key="10">
    <citation type="journal article" date="2001" name="J. Biol. Chem.">
        <title>Acetylation of steroidogenic factor 1 protein regulates its transcriptional activity and recruits the coactivator GCN5.</title>
        <authorList>
            <person name="Jacob A.L."/>
            <person name="Lund J."/>
            <person name="Martinez P."/>
            <person name="Hedin L."/>
        </authorList>
    </citation>
    <scope>ACETYLATION AT LYS-34; LYS-38 AND LYS-72</scope>
    <scope>SUBCELLULAR LOCATION</scope>
</reference>
<reference key="11">
    <citation type="journal article" date="2002" name="Endocrinology">
        <title>Transcriptional activation of human CYP17 in H295R adrenocortical cells depends on complex formation among p54(nrb)/NonO, protein-associated splicing factor, and SF-1, a complex that also participates in repression of transcription.</title>
        <authorList>
            <person name="Sewer M.B."/>
            <person name="Nguyen V.Q."/>
            <person name="Huang C.J."/>
            <person name="Tucker P.W."/>
            <person name="Kagawa N."/>
            <person name="Waterman M.R."/>
        </authorList>
    </citation>
    <scope>INTERACTION WITH SFPQ</scope>
    <scope>IDENTIFICATION IN A COMPLEX WITH SFPQ AND NONO</scope>
</reference>
<reference key="12">
    <citation type="journal article" date="2004" name="Mol. Endocrinol.">
        <title>Small ubiquitin-like modifier 1 (SUMO-1) modification of the synergy control motif of Ad4 binding protein/steroidogenic factor 1 (Ad4BP/SF-1) regulates synergistic transcription between Ad4BP/SF-1 and Sox9.</title>
        <authorList>
            <person name="Komatsu T."/>
            <person name="Mizusaki H."/>
            <person name="Mukai T."/>
            <person name="Ogawa H."/>
            <person name="Baba D."/>
            <person name="Shirakawa M."/>
            <person name="Hatakeyama S."/>
            <person name="Nakayama K.I."/>
            <person name="Yamamoto H."/>
            <person name="Kikuchi A."/>
            <person name="Morohashi K."/>
        </authorList>
    </citation>
    <scope>SUMOYLATION AT LYS-119 AND LYS-194</scope>
    <scope>MUTAGENESIS OF LYS-119 AND LYS-194</scope>
</reference>
<reference key="13">
    <citation type="journal article" date="2007" name="Mol. Cell. Biol.">
        <title>Cyclic AMP stimulates SF-1-dependent CYP11A1 expression through homeodomain-interacting protein kinase 3-mediated Jun N-terminal kinase and c-Jun phosphorylation.</title>
        <authorList>
            <person name="Lan H.-C."/>
            <person name="Li H.-J."/>
            <person name="Lin G."/>
            <person name="Lai P.-Y."/>
            <person name="Chung B.-C."/>
        </authorList>
    </citation>
    <scope>FUNCTION</scope>
    <scope>INTERACTION WITH HIPK3</scope>
</reference>
<reference key="14">
    <citation type="journal article" date="2007" name="Mol. Cell. Biol.">
        <title>Cyclic AMP-stimulated interaction between steroidogenic factor 1 and diacylglycerol kinase theta facilitates induction of CYP17.</title>
        <authorList>
            <person name="Li D."/>
            <person name="Urs A.N."/>
            <person name="Allegood J."/>
            <person name="Leon A."/>
            <person name="Merrill A.H. Jr."/>
            <person name="Sewer M.B."/>
        </authorList>
    </citation>
    <scope>INTERACTION WITH DGKQ</scope>
</reference>
<reference key="15">
    <citation type="journal article" date="2008" name="Mol. Endocrinol.">
        <title>Phosphorylation of steroidogenic factor 1 is mediated by cyclin-dependent kinase 7.</title>
        <authorList>
            <person name="Lewis A.E."/>
            <person name="Rusten M."/>
            <person name="Hoivik E.A."/>
            <person name="Vikse E.L."/>
            <person name="Hansson M.L."/>
            <person name="Wallberg A.E."/>
            <person name="Bakke M."/>
        </authorList>
    </citation>
    <scope>PHOSPHORYLATION AT SER-203</scope>
    <scope>INTERACTION WITH CDK7</scope>
</reference>
<reference key="16">
    <citation type="journal article" date="2009" name="Mol. Cell. Biol.">
        <title>SUMOylation inhibits SF-1 activity by reducing CDK7-mediated serine 203 phosphorylation.</title>
        <authorList>
            <person name="Yang W.-H."/>
            <person name="Heaton J.H."/>
            <person name="Brevig H."/>
            <person name="Mukherjee S."/>
            <person name="Iniguez-Lluhi J.A."/>
            <person name="Hammer G.D."/>
        </authorList>
    </citation>
    <scope>SUMOYLATION</scope>
    <scope>PHOSPHORYLATION AT SER-203</scope>
</reference>
<reference key="17">
    <citation type="journal article" date="2005" name="Cell">
        <title>Structural analyses reveal phosphatidyl inositols as ligands for the NR5 orphan receptors SF-1 and LRH-1.</title>
        <authorList>
            <person name="Krylova I.N."/>
            <person name="Sablin E.P."/>
            <person name="Moore J."/>
            <person name="Xu R.X."/>
            <person name="Waitt G.M."/>
            <person name="MacKay J.A."/>
            <person name="Juzumiene D."/>
            <person name="Bynum J.M."/>
            <person name="Madauss K."/>
            <person name="Montana V."/>
            <person name="Lebedeva L."/>
            <person name="Suzawa M."/>
            <person name="Williams J.D."/>
            <person name="Williams S.P."/>
            <person name="Guy R.K."/>
            <person name="Thornton J.W."/>
            <person name="Fletterick R.J."/>
            <person name="Willson T.M."/>
            <person name="Ingraham H.A."/>
        </authorList>
    </citation>
    <scope>X-RAY CRYSTALLOGRAPHY (3.0 ANGSTROMS) OF 222-461 IN COMPLEX WITH NCOA2 AND PHOSPHOLIPID</scope>
</reference>
<reference evidence="33" key="18">
    <citation type="journal article" date="2005" name="Proc. Natl. Acad. Sci. U.S.A.">
        <title>The crystal structures of human steroidogenic factor-1 and liver receptor homologue-1.</title>
        <authorList>
            <person name="Wang W."/>
            <person name="Zhang C."/>
            <person name="Marimuthu A."/>
            <person name="Krupka H.I."/>
            <person name="Tabrizizad M."/>
            <person name="Shelloe R."/>
            <person name="Mehra U."/>
            <person name="Eng K."/>
            <person name="Nguyen H."/>
            <person name="Settachatgul C."/>
            <person name="Powell B."/>
            <person name="Milburn M.V."/>
            <person name="West B.L."/>
        </authorList>
    </citation>
    <scope>X-RAY CRYSTALLOGRAPHY (2.1 ANGSTROMS) OF 221-461 IN COMPLEX WITH NCOA2 AND A PHOSPHATIDYLETHANOLAMINE</scope>
    <scope>MUTAGENESIS OF ALA-269; GLY-341; LEU-344; ALA-433; TYR-436 AND LYS-440</scope>
</reference>
<reference key="19">
    <citation type="journal article" date="1999" name="Nat. Genet.">
        <title>A mutation in the gene encoding steroidogenic factor-1 causes XY sex reversal and adrenal failure in humans.</title>
        <authorList>
            <person name="Achermann J.C."/>
            <person name="Ito M."/>
            <person name="Ito M."/>
            <person name="Hindmarsh P.C."/>
            <person name="Jameson J.L."/>
        </authorList>
    </citation>
    <scope>VARIANT SRXY3 GLU-35</scope>
</reference>
<reference key="20">
    <citation type="journal article" date="2000" name="Am. J. Hum. Genet.">
        <title>Apparently normal ovarian differentiation in a prepubertal girl with transcriptionally inactive steroidogenic factor 1 (NR5A1/SF-1) and adrenocortical insufficiency.</title>
        <authorList>
            <person name="Biason-Lauber A."/>
            <person name="Schoenle E.J."/>
        </authorList>
    </citation>
    <scope>VARIANT AINR LEU-255</scope>
</reference>
<reference key="21">
    <citation type="journal article" date="2002" name="J. Clin. Endocrinol. Metab.">
        <title>Gonadal determination and adrenal development are regulated by the orphan nuclear receptor steroidogenic factor-1, in a dose-dependent manner.</title>
        <authorList>
            <person name="Achermann J.C."/>
            <person name="Ozisik G."/>
            <person name="Ito M."/>
            <person name="Orun U.A."/>
            <person name="Harmanci K."/>
            <person name="Gurakan B."/>
            <person name="Jameson J.L."/>
        </authorList>
    </citation>
    <scope>VARIANT SRXY3 GLN-92</scope>
</reference>
<reference key="22">
    <citation type="journal article" date="2007" name="J. Clin. Endocrinol. Metab.">
        <title>Heterozygous missense mutations in steroidogenic factor 1 (SF1/Ad4BP, NR5A1) are associated with 46,XY disorders of sex development with normal adrenal function.</title>
        <authorList>
            <person name="Lin L."/>
            <person name="Philibert P."/>
            <person name="Ferraz-de-Souza B."/>
            <person name="Kelberman D."/>
            <person name="Homfray T."/>
            <person name="Albanese A."/>
            <person name="Molini V."/>
            <person name="Sebire N.J."/>
            <person name="Einaudi S."/>
            <person name="Conway G.S."/>
            <person name="Hughes I.A."/>
            <person name="Jameson J.L."/>
            <person name="Sultan C."/>
            <person name="Dattani M.T."/>
            <person name="Achermann J.C."/>
        </authorList>
    </citation>
    <scope>VARIANTS SRXY3 MET-15; ILE-78; SER-91 AND GLN-437</scope>
</reference>
<reference key="23">
    <citation type="journal article" date="2008" name="Hum. Mutat.">
        <title>Five novel mutations in steroidogenic factor 1 (SF1, NR5A1) in 46,XY patients with severe underandrogenization but without adrenal insufficiency.</title>
        <authorList>
            <person name="Koehler B."/>
            <person name="Lin L."/>
            <person name="Ferraz-de-Souza B."/>
            <person name="Wieacker P."/>
            <person name="Heidemann P."/>
            <person name="Schroeder V."/>
            <person name="Biebermann H."/>
            <person name="Schnabel D."/>
            <person name="Grueters A."/>
            <person name="Achermann J.C."/>
        </authorList>
    </citation>
    <scope>VARIANTS SRXY3 SER-33 AND HIS-84</scope>
    <scope>VARIANT ALA-146</scope>
    <scope>CHARACTERIZATION OF VARIANTS SRXY3 SER-33 AND HIS-84</scope>
</reference>
<reference key="24">
    <citation type="journal article" date="2009" name="N. Engl. J. Med.">
        <title>Mutations in NR5A1 associated with ovarian insufficiency.</title>
        <authorList>
            <person name="Lourenco D."/>
            <person name="Brauner R."/>
            <person name="Lin L."/>
            <person name="De Perdigo A."/>
            <person name="Weryha G."/>
            <person name="Muresan M."/>
            <person name="Boudjenah R."/>
            <person name="Guerra-Junior G."/>
            <person name="Maciel-Guerra A.T."/>
            <person name="Achermann J.C."/>
            <person name="McElreavey K."/>
            <person name="Bashamboo A."/>
        </authorList>
    </citation>
    <scope>VARIANTS POF7 ALA-123; LEU-129; 231-LEU--LEU-233 DEL AND ASN-293</scope>
    <scope>VARIANT ALA-146</scope>
    <scope>CHARACTERIZATION OF VARIANTS POF7 ALA-123; LEU-129 AND ASN-293</scope>
</reference>
<reference key="25">
    <citation type="journal article" date="2010" name="Am. J. Hum. Genet.">
        <title>Human male infertility associated with mutations in NR5A1 encoding steroidogenic factor 1.</title>
        <authorList>
            <person name="Bashamboo A."/>
            <person name="Ferraz-de-Souza B."/>
            <person name="Lourenco D."/>
            <person name="Lin L."/>
            <person name="Sebire N.J."/>
            <person name="Montjean D."/>
            <person name="Bignon-Topalovic J."/>
            <person name="Mandelbaum J."/>
            <person name="Siffroi J.P."/>
            <person name="Christin-Maitre S."/>
            <person name="Radhakrishna U."/>
            <person name="Rouba H."/>
            <person name="Ravel C."/>
            <person name="Seeler J."/>
            <person name="Achermann J.C."/>
            <person name="McElreavey K."/>
        </authorList>
    </citation>
    <scope>VARIANTS SPGF8 ALA-123; LEU-129; LEU-131; CYS-191; SER-212 AND ASN-238</scope>
    <scope>CHARACTERIZATION OF VARIANTS SPGF8 LEU-131; CYS-191; SER-212 AND ASN-238</scope>
</reference>
<reference key="26">
    <citation type="journal article" date="2014" name="BMC Med. Genet.">
        <title>The novel p.Cys65Tyr mutation in NR5A1 gene in three 46,XY siblings with normal testosterone levels and their mother with primary ovarian insufficiency.</title>
        <authorList>
            <person name="Fabbri H.C."/>
            <person name="de Andrade J.G."/>
            <person name="Soardi F.C."/>
            <person name="de Calais F.L."/>
            <person name="Petroli R.J."/>
            <person name="Maciel-Guerra A.T."/>
            <person name="Guerra-Junior G."/>
            <person name="de Mello M.P."/>
        </authorList>
    </citation>
    <scope>VARIANT SRXY3 TYR-65</scope>
</reference>
<reference key="27">
    <citation type="journal article" date="2016" name="J. Clin. Endocrinol. Metab.">
        <title>Rare causes of primary adrenal insufficiency: genetic and clinical characterization of a large nationwide cohort.</title>
        <authorList>
            <person name="Guran T."/>
            <person name="Buonocore F."/>
            <person name="Saka N."/>
            <person name="Ozbek M.N."/>
            <person name="Aycan Z."/>
            <person name="Bereket A."/>
            <person name="Bas F."/>
            <person name="Darcan S."/>
            <person name="Bideci A."/>
            <person name="Guven A."/>
            <person name="Demir K."/>
            <person name="Akinci A."/>
            <person name="Buyukinan M."/>
            <person name="Aydin B.K."/>
            <person name="Turan S."/>
            <person name="Agladioglu S.Y."/>
            <person name="Atay Z."/>
            <person name="Abali Z.Y."/>
            <person name="Tarim O."/>
            <person name="Catli G."/>
            <person name="Yuksel B."/>
            <person name="Akcay T."/>
            <person name="Yildiz M."/>
            <person name="Ozen S."/>
            <person name="Doger E."/>
            <person name="Demirbilek H."/>
            <person name="Ucar A."/>
            <person name="Isik E."/>
            <person name="Ozhan B."/>
            <person name="Bolu S."/>
            <person name="Ozgen I.T."/>
            <person name="Suntharalingham J.P."/>
            <person name="Achermann J.C."/>
        </authorList>
    </citation>
    <scope>VARIANT AINR GLN-92</scope>
</reference>
<reference key="28">
    <citation type="journal article" date="2017" name="Genet. Med.">
        <title>NR5A1 is a novel disease gene for 46,XX testicular and ovotesticular disorders of sex development.</title>
        <authorList>
            <person name="Baetens D."/>
            <person name="Stoop H."/>
            <person name="Peelman F."/>
            <person name="Todeschini A.L."/>
            <person name="Rosseel T."/>
            <person name="Coppieters F."/>
            <person name="Veitia R.A."/>
            <person name="Looijenga L.H."/>
            <person name="De Baere E."/>
            <person name="Cools M."/>
        </authorList>
    </citation>
    <scope>VARIANT SRXX4 TRP-92</scope>
    <scope>CHARACTERIZATION OF VARIANT SRXX4 TRP-92</scope>
    <scope>INVOLVEMENT IN SRXX4</scope>
    <scope>CHARACTERIZATION OF VARIANT SRXY3 GLN-92</scope>
    <scope>SUBCELLULAR LOCATION</scope>
</reference>
<reference key="29">
    <citation type="journal article" date="2017" name="Horm. Res. Paediatr.">
        <title>A 46,XX ovotesticular disorder of sex development likely caused by a steroidogenic factor-1 (NR5A1) variant.</title>
        <authorList>
            <person name="Swartz J.M."/>
            <person name="Ciarlo R."/>
            <person name="Guo M.H."/>
            <person name="Abrha A."/>
            <person name="Weaver B."/>
            <person name="Diamond D.A."/>
            <person name="Chan Y.M."/>
            <person name="Hirschhorn J.N."/>
        </authorList>
    </citation>
    <scope>INVOLVEMENT IN SRXX4</scope>
    <scope>VARIANT SRXX4 GLN-92</scope>
</reference>
<reference key="30">
    <citation type="journal article" date="2016" name="Hum. Mol. Genet.">
        <title>A recurrent p.Arg92Trp variant in steroidogenic factor-1 (NR5A1) can act as a molecular switch in human sex development.</title>
        <authorList>
            <consortium name="Members of UDN"/>
            <person name="Bashamboo A."/>
            <person name="Donohoue P.A."/>
            <person name="Vilain E."/>
            <person name="Rojo S."/>
            <person name="Calvel P."/>
            <person name="Seneviratne S.N."/>
            <person name="Buonocore F."/>
            <person name="Barseghyan H."/>
            <person name="Bingham N."/>
            <person name="Rosenfeld J.A."/>
            <person name="Mulukutla S.N."/>
            <person name="Jain M."/>
            <person name="Burrage L."/>
            <person name="Dhar S."/>
            <person name="Balasubramanyam A."/>
            <person name="Lee B."/>
            <person name="Dumargne M.C."/>
            <person name="Eozenou C."/>
            <person name="Suntharalingham J.P."/>
            <person name="de Silva K."/>
            <person name="Lin L."/>
            <person name="Bignon-Topalovic J."/>
            <person name="Poulat F."/>
            <person name="Lagos C.F."/>
            <person name="McElreavey K."/>
            <person name="Achermann J.C."/>
        </authorList>
    </citation>
    <scope>INVOLVEMENT IN SRXX4</scope>
    <scope>INVOLVEMENT IN SRXY3</scope>
    <scope>VARIANT SRXX4 TRP-92</scope>
    <scope>VARIANT SRXY3 TRP-92</scope>
    <scope>CHARACTERIZATION OF VARIANT SRXX4 TRP-92</scope>
    <scope>FUNCTION</scope>
</reference>
<reference key="31">
    <citation type="journal article" date="2017" name="Hum. Mutat.">
        <title>Identical NR5A1 missense mutations in two unrelated 46,XX individuals with testicular tissues.</title>
        <authorList>
            <person name="Igarashi M."/>
            <person name="Takasawa K."/>
            <person name="Hakoda A."/>
            <person name="Kanno J."/>
            <person name="Takada S."/>
            <person name="Miyado M."/>
            <person name="Baba T."/>
            <person name="Morohashi K.I."/>
            <person name="Tajima T."/>
            <person name="Hata K."/>
            <person name="Nakabayashi K."/>
            <person name="Matsubara Y."/>
            <person name="Sekido R."/>
            <person name="Ogata T."/>
            <person name="Kashimada K."/>
            <person name="Fukami M."/>
        </authorList>
    </citation>
    <scope>VARIANT SRXX4 TRP-92</scope>
    <scope>CHARACTERIZATION OF VARIANT SRXX4 TRP-92</scope>
    <scope>INVOLVEMENT IN SRXX4</scope>
</reference>
<reference key="32">
    <citation type="journal article" date="2017" name="PLoS ONE">
        <title>New NR5A1 mutations and phenotypic variations of gonadal dysgenesis.</title>
        <authorList>
            <person name="Werner R."/>
            <person name="Moenig I."/>
            <person name="Luenstedt R."/>
            <person name="Wuensch L."/>
            <person name="Thorns C."/>
            <person name="Reiz B."/>
            <person name="Krause A."/>
            <person name="Schwab K.O."/>
            <person name="Binder G."/>
            <person name="Holterhus P.M."/>
            <person name="Hiort O."/>
        </authorList>
    </citation>
    <scope>VARIANTS SRXY3 18-ASP--GLY-22 DEL AND PRO-40</scope>
    <scope>CHARACTERIZATION OF VARIANTS SRXY3 18-ASP--GLY-22 DEL AND PRO-40</scope>
    <scope>FUNCTION</scope>
</reference>
<feature type="chain" id="PRO_0000053729" description="Steroidogenic factor 1">
    <location>
        <begin position="1"/>
        <end position="461"/>
    </location>
</feature>
<feature type="domain" description="NR LBD" evidence="3">
    <location>
        <begin position="222"/>
        <end position="459"/>
    </location>
</feature>
<feature type="DNA-binding region" description="Nuclear receptor" evidence="2">
    <location>
        <begin position="10"/>
        <end position="85"/>
    </location>
</feature>
<feature type="zinc finger region" description="NR C4-type" evidence="2">
    <location>
        <begin position="13"/>
        <end position="33"/>
    </location>
</feature>
<feature type="zinc finger region" description="NR C4-type" evidence="2">
    <location>
        <begin position="49"/>
        <end position="73"/>
    </location>
</feature>
<feature type="region of interest" description="Disordered" evidence="4">
    <location>
        <begin position="119"/>
        <end position="157"/>
    </location>
</feature>
<feature type="region of interest" description="Important for dimerization">
    <location>
        <begin position="230"/>
        <end position="461"/>
    </location>
</feature>
<feature type="compositionally biased region" description="Pro residues" evidence="4">
    <location>
        <begin position="126"/>
        <end position="136"/>
    </location>
</feature>
<feature type="binding site" evidence="1">
    <location>
        <position position="341"/>
    </location>
    <ligand>
        <name>a 1,2-diacyl-sn-glycero-3-phosphocholine</name>
        <dbReference type="ChEBI" id="CHEBI:57643"/>
    </ligand>
</feature>
<feature type="binding site" evidence="13">
    <location>
        <position position="341"/>
    </location>
    <ligand>
        <name>a 1,2-diacylglycero-3-phosphoethanolamine</name>
        <dbReference type="ChEBI" id="CHEBI:57613"/>
    </ligand>
</feature>
<feature type="binding site" evidence="1">
    <location>
        <position position="436"/>
    </location>
    <ligand>
        <name>a 1,2-diacyl-sn-glycero-3-phosphocholine</name>
        <dbReference type="ChEBI" id="CHEBI:57643"/>
    </ligand>
</feature>
<feature type="binding site" evidence="13">
    <location>
        <position position="436"/>
    </location>
    <ligand>
        <name>a 1,2-diacylglycero-3-phosphoethanolamine</name>
        <dbReference type="ChEBI" id="CHEBI:57613"/>
    </ligand>
</feature>
<feature type="binding site" evidence="1">
    <location>
        <position position="440"/>
    </location>
    <ligand>
        <name>a 1,2-diacyl-sn-glycero-3-phosphocholine</name>
        <dbReference type="ChEBI" id="CHEBI:57643"/>
    </ligand>
</feature>
<feature type="binding site" evidence="13">
    <location>
        <position position="440"/>
    </location>
    <ligand>
        <name>a 1,2-diacylglycero-3-phosphoethanolamine</name>
        <dbReference type="ChEBI" id="CHEBI:57613"/>
    </ligand>
</feature>
<feature type="modified residue" description="N6-acetyllysine" evidence="32">
    <location>
        <position position="34"/>
    </location>
</feature>
<feature type="modified residue" description="N6-acetyllysine" evidence="32">
    <location>
        <position position="38"/>
    </location>
</feature>
<feature type="modified residue" description="N6-acetyllysine" evidence="32">
    <location>
        <position position="72"/>
    </location>
</feature>
<feature type="modified residue" description="Phosphoserine; by CDK7" evidence="5 18 19">
    <location>
        <position position="203"/>
    </location>
</feature>
<feature type="cross-link" description="Glycyl lysine isopeptide (Lys-Gly) (interchain with G-Cter in SUMO)" evidence="11">
    <location>
        <position position="119"/>
    </location>
</feature>
<feature type="cross-link" description="Glycyl lysine isopeptide (Lys-Gly) (interchain with G-Cter in SUMO)" evidence="11">
    <location>
        <position position="194"/>
    </location>
</feature>
<feature type="sequence variant" id="VAR_063255" description="In SRXY3; without adrenal failure; dbSNP:rs104894124." evidence="14">
    <original>V</original>
    <variation>M</variation>
    <location>
        <position position="15"/>
    </location>
</feature>
<feature type="sequence variant" id="VAR_079571" description="In SRXY3; loss of DNA-binding; significantly decreased transactivator activity." evidence="28">
    <location>
        <begin position="18"/>
        <end position="22"/>
    </location>
</feature>
<feature type="sequence variant" id="VAR_039106" description="In SRXY3; without adrenal failure; markedly impaired transcriptional activity; dbSNP:rs1832496590." evidence="17">
    <original>C</original>
    <variation>S</variation>
    <location>
        <position position="33"/>
    </location>
</feature>
<feature type="sequence variant" id="VAR_004737" description="In SRXY3; with adrenal failure; dbSNP:rs121918654." evidence="6">
    <original>G</original>
    <variation>E</variation>
    <location>
        <position position="35"/>
    </location>
</feature>
<feature type="sequence variant" id="VAR_079572" description="In SRXY3; loss of DNA-binding; significantly decreased transactivator activity." evidence="28">
    <original>T</original>
    <variation>P</variation>
    <location>
        <position position="40"/>
    </location>
</feature>
<feature type="sequence variant" id="VAR_078136" description="In SRXY3; without adrenal failure." evidence="22">
    <original>C</original>
    <variation>Y</variation>
    <location>
        <position position="65"/>
    </location>
</feature>
<feature type="sequence variant" id="VAR_063256" description="In SRXY3; without adrenal failure; dbSNP:rs104894125." evidence="14">
    <original>M</original>
    <variation>I</variation>
    <location>
        <position position="78"/>
    </location>
</feature>
<feature type="sequence variant" id="VAR_039107" description="In SRXY3; without adrenal failure; markedly impaired transcriptional activity; dbSNP:rs375469069." evidence="17">
    <original>R</original>
    <variation>H</variation>
    <location>
        <position position="84"/>
    </location>
</feature>
<feature type="sequence variant" id="VAR_063257" description="In SRXY3; without adrenal failure; dbSNP:rs104894126." evidence="14">
    <original>G</original>
    <variation>S</variation>
    <location>
        <position position="91"/>
    </location>
</feature>
<feature type="sequence variant" id="VAR_016982" description="In SRXY3, SRXX4 and AINR; decreased transactivator activity; no effect on nuclear location; dbSNP:rs104894119." evidence="10 23 25 27">
    <original>R</original>
    <variation>Q</variation>
    <location>
        <position position="92"/>
    </location>
</feature>
<feature type="sequence variant" id="VAR_078137" description="In SRXY3 and SRXX4; decreased transactivator activity; loss of DNA binding, at least to some known consensus target sequences; no effect on nuclear location; dbSNP:rs886039769." evidence="24 25 26">
    <original>R</original>
    <variation>W</variation>
    <location>
        <position position="92"/>
    </location>
</feature>
<feature type="sequence variant" id="VAR_062967" description="In SPGF8 and POF7; activity levels similar to wild-type; dbSNP:rs200163795." evidence="20 21">
    <original>G</original>
    <variation>A</variation>
    <location>
        <position position="123"/>
    </location>
</feature>
<feature type="sequence variant" id="VAR_062968" description="In SPGF8 and POF7; loss of activity; dbSNP:rs200749741." evidence="20 21">
    <original>P</original>
    <variation>L</variation>
    <location>
        <position position="129"/>
    </location>
</feature>
<feature type="sequence variant" id="VAR_065866" description="In SPGF8; impairs transactivational activity; dbSNP:rs387906690." evidence="21">
    <original>P</original>
    <variation>L</variation>
    <location>
        <position position="131"/>
    </location>
</feature>
<feature type="sequence variant" id="VAR_039108" description="In dbSNP:rs1110061." evidence="17 20">
    <original>G</original>
    <variation>A</variation>
    <location>
        <position position="146"/>
    </location>
</feature>
<feature type="sequence variant" id="VAR_065867" description="In SPGF8; impairs transactivational activity; dbSNP:rs1253324106." evidence="21">
    <original>R</original>
    <variation>C</variation>
    <location>
        <position position="191"/>
    </location>
</feature>
<feature type="sequence variant" id="VAR_065868" description="In SPGF8; impairs transactivational activity; dbSNP:rs201095702." evidence="21">
    <original>G</original>
    <variation>S</variation>
    <location>
        <position position="212"/>
    </location>
</feature>
<feature type="sequence variant" id="VAR_062969" description="In POF7." evidence="20">
    <location>
        <begin position="231"/>
        <end position="233"/>
    </location>
</feature>
<feature type="sequence variant" id="VAR_065869" description="In SPGF8; impairs transactivational activity; dbSNP:rs780568525." evidence="21">
    <original>D</original>
    <variation>N</variation>
    <location>
        <position position="238"/>
    </location>
</feature>
<feature type="sequence variant" id="VAR_016983" description="In AINR; dbSNP:rs104894118." evidence="7">
    <original>R</original>
    <variation>L</variation>
    <location>
        <position position="255"/>
    </location>
</feature>
<feature type="sequence variant" id="VAR_062970" description="In POF7; without adrenal failure; partial loss of activity; dbSNP:rs121918655." evidence="20">
    <original>D</original>
    <variation>N</variation>
    <location>
        <position position="293"/>
    </location>
</feature>
<feature type="sequence variant" id="VAR_063258" description="In SRXY3; without adrenal failure; dbSNP:rs104894120." evidence="14">
    <original>L</original>
    <variation>Q</variation>
    <location>
        <position position="437"/>
    </location>
</feature>
<feature type="mutagenesis site" description="Loss of sumoylation; when associated with R-194." evidence="11">
    <original>K</original>
    <variation>R</variation>
    <location>
        <position position="119"/>
    </location>
</feature>
<feature type="mutagenesis site" description="Loss of sumoylation." evidence="11">
    <original>K</original>
    <variation>R</variation>
    <location>
        <position position="194"/>
    </location>
</feature>
<feature type="mutagenesis site" description="Strongly reduced transactivation." evidence="13">
    <original>A</original>
    <variation>F</variation>
    <location>
        <position position="269"/>
    </location>
</feature>
<feature type="mutagenesis site" description="Reduced transactivation. Strongly reduced transactivation; when associated with F-344." evidence="13">
    <original>G</original>
    <variation>E</variation>
    <location>
        <position position="341"/>
    </location>
</feature>
<feature type="mutagenesis site" description="Reduced transactivation. Strongly reduced transactivation; when associated with E-341." evidence="13">
    <original>L</original>
    <variation>F</variation>
    <location>
        <position position="344"/>
    </location>
</feature>
<feature type="mutagenesis site" description="Strongly reduced transactivation." evidence="13">
    <original>A</original>
    <variation>F</variation>
    <location>
        <position position="433"/>
    </location>
</feature>
<feature type="mutagenesis site" description="Loss of transactivation; when associated with A-440." evidence="13">
    <original>Y</original>
    <variation>F</variation>
    <location>
        <position position="436"/>
    </location>
</feature>
<feature type="mutagenesis site" description="Loss of transactivation; when associated with F-436." evidence="13">
    <original>K</original>
    <variation>A</variation>
    <location>
        <position position="440"/>
    </location>
</feature>
<feature type="sequence conflict" description="In Ref. 1; BAA13546." evidence="31" ref="1">
    <original>K</original>
    <variation>N</variation>
    <location>
        <position position="63"/>
    </location>
</feature>
<feature type="helix" evidence="35">
    <location>
        <begin position="225"/>
        <end position="233"/>
    </location>
</feature>
<feature type="helix" evidence="35">
    <location>
        <begin position="239"/>
        <end position="243"/>
    </location>
</feature>
<feature type="helix" evidence="35">
    <location>
        <begin position="262"/>
        <end position="282"/>
    </location>
</feature>
<feature type="helix" evidence="35">
    <location>
        <begin position="286"/>
        <end position="288"/>
    </location>
</feature>
<feature type="helix" evidence="35">
    <location>
        <begin position="291"/>
        <end position="317"/>
    </location>
</feature>
<feature type="strand" evidence="35">
    <location>
        <begin position="322"/>
        <end position="324"/>
    </location>
</feature>
<feature type="strand" evidence="34">
    <location>
        <begin position="326"/>
        <end position="328"/>
    </location>
</feature>
<feature type="strand" evidence="35">
    <location>
        <begin position="330"/>
        <end position="332"/>
    </location>
</feature>
<feature type="helix" evidence="35">
    <location>
        <begin position="333"/>
        <end position="339"/>
    </location>
</feature>
<feature type="helix" evidence="35">
    <location>
        <begin position="342"/>
        <end position="360"/>
    </location>
</feature>
<feature type="helix" evidence="35">
    <location>
        <begin position="365"/>
        <end position="376"/>
    </location>
</feature>
<feature type="helix" evidence="35">
    <location>
        <begin position="381"/>
        <end position="383"/>
    </location>
</feature>
<feature type="helix" evidence="35">
    <location>
        <begin position="387"/>
        <end position="408"/>
    </location>
</feature>
<feature type="strand" evidence="35">
    <location>
        <begin position="411"/>
        <end position="413"/>
    </location>
</feature>
<feature type="helix" evidence="35">
    <location>
        <begin position="415"/>
        <end position="442"/>
    </location>
</feature>
<feature type="helix" evidence="35">
    <location>
        <begin position="451"/>
        <end position="456"/>
    </location>
</feature>
<dbReference type="EMBL" id="D88155">
    <property type="protein sequence ID" value="BAA13546.1"/>
    <property type="molecule type" value="Genomic_DNA"/>
</dbReference>
<dbReference type="EMBL" id="U76388">
    <property type="protein sequence ID" value="AAB53105.1"/>
    <property type="molecule type" value="mRNA"/>
</dbReference>
<dbReference type="EMBL" id="AL137846">
    <property type="status" value="NOT_ANNOTATED_CDS"/>
    <property type="molecule type" value="Genomic_DNA"/>
</dbReference>
<dbReference type="EMBL" id="AL354979">
    <property type="status" value="NOT_ANNOTATED_CDS"/>
    <property type="molecule type" value="Genomic_DNA"/>
</dbReference>
<dbReference type="EMBL" id="CH471090">
    <property type="protein sequence ID" value="EAW87591.1"/>
    <property type="molecule type" value="Genomic_DNA"/>
</dbReference>
<dbReference type="EMBL" id="BC032501">
    <property type="protein sequence ID" value="AAH32501.1"/>
    <property type="molecule type" value="mRNA"/>
</dbReference>
<dbReference type="EMBL" id="U32592">
    <property type="protein sequence ID" value="AAA75332.1"/>
    <property type="molecule type" value="Genomic_DNA"/>
</dbReference>
<dbReference type="CCDS" id="CCDS6856.1"/>
<dbReference type="PIR" id="JC4972">
    <property type="entry name" value="JC4972"/>
</dbReference>
<dbReference type="RefSeq" id="NP_004950.2">
    <property type="nucleotide sequence ID" value="NM_004959.4"/>
</dbReference>
<dbReference type="RefSeq" id="XP_005251928.1">
    <property type="nucleotide sequence ID" value="XM_005251871.3"/>
</dbReference>
<dbReference type="RefSeq" id="XP_011516757.1">
    <property type="nucleotide sequence ID" value="XM_011518455.2"/>
</dbReference>
<dbReference type="PDB" id="1YOW">
    <property type="method" value="X-ray"/>
    <property type="resolution" value="3.00 A"/>
    <property type="chains" value="A=222-461"/>
</dbReference>
<dbReference type="PDB" id="1ZDT">
    <property type="method" value="X-ray"/>
    <property type="resolution" value="2.10 A"/>
    <property type="chains" value="A/B=221-461"/>
</dbReference>
<dbReference type="PDB" id="4QJR">
    <property type="method" value="X-ray"/>
    <property type="resolution" value="2.40 A"/>
    <property type="chains" value="A=218-461"/>
</dbReference>
<dbReference type="PDB" id="4QK4">
    <property type="method" value="X-ray"/>
    <property type="resolution" value="2.81 A"/>
    <property type="chains" value="A=218-461"/>
</dbReference>
<dbReference type="PDB" id="7KHT">
    <property type="method" value="X-ray"/>
    <property type="resolution" value="2.50 A"/>
    <property type="chains" value="A=218-461"/>
</dbReference>
<dbReference type="PDB" id="8DAF">
    <property type="method" value="X-ray"/>
    <property type="resolution" value="2.59 A"/>
    <property type="chains" value="A/B=218-461"/>
</dbReference>
<dbReference type="PDBsum" id="1YOW"/>
<dbReference type="PDBsum" id="1ZDT"/>
<dbReference type="PDBsum" id="4QJR"/>
<dbReference type="PDBsum" id="4QK4"/>
<dbReference type="PDBsum" id="7KHT"/>
<dbReference type="PDBsum" id="8DAF"/>
<dbReference type="SMR" id="Q13285"/>
<dbReference type="BioGRID" id="108792">
    <property type="interactions" value="40"/>
</dbReference>
<dbReference type="CORUM" id="Q13285"/>
<dbReference type="FunCoup" id="Q13285">
    <property type="interactions" value="1593"/>
</dbReference>
<dbReference type="IntAct" id="Q13285">
    <property type="interactions" value="72"/>
</dbReference>
<dbReference type="MINT" id="Q13285"/>
<dbReference type="STRING" id="9606.ENSP00000362690"/>
<dbReference type="BindingDB" id="Q13285"/>
<dbReference type="ChEMBL" id="CHEMBL4666"/>
<dbReference type="DrugBank" id="DB04683">
    <property type="generic name" value="(2R)-3-{[{[(2S)-2,3-DIHYDROXYPROPYL]OXY}(HYDROXY)PHOSPHORYL]OXY}-2-[(9E)-HEXADEC-9-ENOYLOXY]PROPYL (9E)-OCTADEC-9-ENOATE"/>
</dbReference>
<dbReference type="DrugBank" id="DB04752">
    <property type="generic name" value="Phosphatidyl ethanol"/>
</dbReference>
<dbReference type="GuidetoPHARMACOLOGY" id="632"/>
<dbReference type="GlyGen" id="Q13285">
    <property type="glycosylation" value="1 site, 1 O-linked glycan (1 site)"/>
</dbReference>
<dbReference type="iPTMnet" id="Q13285"/>
<dbReference type="PhosphoSitePlus" id="Q13285"/>
<dbReference type="BioMuta" id="NR5A1"/>
<dbReference type="DMDM" id="3121738"/>
<dbReference type="MassIVE" id="Q13285"/>
<dbReference type="PaxDb" id="9606-ENSP00000362690"/>
<dbReference type="PeptideAtlas" id="Q13285"/>
<dbReference type="ProteomicsDB" id="59276"/>
<dbReference type="Antibodypedia" id="16333">
    <property type="antibodies" value="487 antibodies from 36 providers"/>
</dbReference>
<dbReference type="DNASU" id="2516"/>
<dbReference type="Ensembl" id="ENST00000373588.9">
    <property type="protein sequence ID" value="ENSP00000362690.4"/>
    <property type="gene ID" value="ENSG00000136931.10"/>
</dbReference>
<dbReference type="GeneID" id="2516"/>
<dbReference type="KEGG" id="hsa:2516"/>
<dbReference type="MANE-Select" id="ENST00000373588.9">
    <property type="protein sequence ID" value="ENSP00000362690.4"/>
    <property type="RefSeq nucleotide sequence ID" value="NM_004959.5"/>
    <property type="RefSeq protein sequence ID" value="NP_004950.2"/>
</dbReference>
<dbReference type="UCSC" id="uc004boo.2">
    <property type="organism name" value="human"/>
</dbReference>
<dbReference type="AGR" id="HGNC:7983"/>
<dbReference type="CTD" id="2516"/>
<dbReference type="DisGeNET" id="2516"/>
<dbReference type="GeneCards" id="NR5A1"/>
<dbReference type="GeneReviews" id="NR5A1"/>
<dbReference type="HGNC" id="HGNC:7983">
    <property type="gene designation" value="NR5A1"/>
</dbReference>
<dbReference type="HPA" id="ENSG00000136931">
    <property type="expression patterns" value="Group enriched (adrenal gland, lymphoid tissue)"/>
</dbReference>
<dbReference type="MalaCards" id="NR5A1"/>
<dbReference type="MIM" id="184757">
    <property type="type" value="gene"/>
</dbReference>
<dbReference type="MIM" id="612964">
    <property type="type" value="phenotype"/>
</dbReference>
<dbReference type="MIM" id="612965">
    <property type="type" value="phenotype"/>
</dbReference>
<dbReference type="MIM" id="613957">
    <property type="type" value="phenotype"/>
</dbReference>
<dbReference type="MIM" id="617480">
    <property type="type" value="phenotype"/>
</dbReference>
<dbReference type="neXtProt" id="NX_Q13285"/>
<dbReference type="OpenTargets" id="ENSG00000136931"/>
<dbReference type="Orphanet" id="243">
    <property type="disease" value="46,XX gonadal dysgenesis"/>
</dbReference>
<dbReference type="Orphanet" id="2138">
    <property type="disease" value="46,XX ovotesticular difference of sex development"/>
</dbReference>
<dbReference type="Orphanet" id="393">
    <property type="disease" value="46,XX testicular difference of sex development"/>
</dbReference>
<dbReference type="Orphanet" id="242">
    <property type="disease" value="46,XY complete gonadal dysgenesis"/>
</dbReference>
<dbReference type="Orphanet" id="251510">
    <property type="disease" value="46,XY partial gonadal dysgenesis"/>
</dbReference>
<dbReference type="Orphanet" id="399805">
    <property type="disease" value="Male infertility with azoospermia or oligozoospermia due to single gene mutation"/>
</dbReference>
<dbReference type="PharmGKB" id="PA31764"/>
<dbReference type="VEuPathDB" id="HostDB:ENSG00000136931"/>
<dbReference type="eggNOG" id="KOG4218">
    <property type="taxonomic scope" value="Eukaryota"/>
</dbReference>
<dbReference type="GeneTree" id="ENSGT00940000153391"/>
<dbReference type="HOGENOM" id="CLU_011437_0_0_1"/>
<dbReference type="InParanoid" id="Q13285"/>
<dbReference type="OMA" id="YPYPEVY"/>
<dbReference type="OrthoDB" id="5984981at2759"/>
<dbReference type="PAN-GO" id="Q13285">
    <property type="GO annotations" value="5 GO annotations based on evolutionary models"/>
</dbReference>
<dbReference type="PhylomeDB" id="Q13285"/>
<dbReference type="TreeFam" id="TF350737"/>
<dbReference type="PathwayCommons" id="Q13285"/>
<dbReference type="Reactome" id="R-HSA-383280">
    <property type="pathway name" value="Nuclear Receptor transcription pathway"/>
</dbReference>
<dbReference type="Reactome" id="R-HSA-4090294">
    <property type="pathway name" value="SUMOylation of intracellular receptors"/>
</dbReference>
<dbReference type="Reactome" id="R-HSA-452723">
    <property type="pathway name" value="Transcriptional regulation of pluripotent stem cells"/>
</dbReference>
<dbReference type="Reactome" id="R-HSA-9690406">
    <property type="pathway name" value="Transcriptional regulation of testis differentiation"/>
</dbReference>
<dbReference type="SignaLink" id="Q13285"/>
<dbReference type="SIGNOR" id="Q13285"/>
<dbReference type="BioGRID-ORCS" id="2516">
    <property type="hits" value="23 hits in 1177 CRISPR screens"/>
</dbReference>
<dbReference type="EvolutionaryTrace" id="Q13285"/>
<dbReference type="GeneWiki" id="Steroidogenic_factor_1"/>
<dbReference type="GenomeRNAi" id="2516"/>
<dbReference type="Pharos" id="Q13285">
    <property type="development level" value="Tchem"/>
</dbReference>
<dbReference type="PRO" id="PR:Q13285"/>
<dbReference type="Proteomes" id="UP000005640">
    <property type="component" value="Chromosome 9"/>
</dbReference>
<dbReference type="RNAct" id="Q13285">
    <property type="molecule type" value="protein"/>
</dbReference>
<dbReference type="Bgee" id="ENSG00000136931">
    <property type="expression patterns" value="Expressed in right adrenal gland cortex and 65 other cell types or tissues"/>
</dbReference>
<dbReference type="ExpressionAtlas" id="Q13285">
    <property type="expression patterns" value="baseline and differential"/>
</dbReference>
<dbReference type="GO" id="GO:0000785">
    <property type="term" value="C:chromatin"/>
    <property type="evidence" value="ECO:0000247"/>
    <property type="project" value="NTNU_SB"/>
</dbReference>
<dbReference type="GO" id="GO:0005829">
    <property type="term" value="C:cytosol"/>
    <property type="evidence" value="ECO:0000314"/>
    <property type="project" value="HPA"/>
</dbReference>
<dbReference type="GO" id="GO:0005654">
    <property type="term" value="C:nucleoplasm"/>
    <property type="evidence" value="ECO:0000314"/>
    <property type="project" value="HPA"/>
</dbReference>
<dbReference type="GO" id="GO:0005634">
    <property type="term" value="C:nucleus"/>
    <property type="evidence" value="ECO:0000314"/>
    <property type="project" value="UniProtKB"/>
</dbReference>
<dbReference type="GO" id="GO:0090575">
    <property type="term" value="C:RNA polymerase II transcription regulator complex"/>
    <property type="evidence" value="ECO:0000250"/>
    <property type="project" value="BHF-UCL"/>
</dbReference>
<dbReference type="GO" id="GO:0003682">
    <property type="term" value="F:chromatin binding"/>
    <property type="evidence" value="ECO:0000250"/>
    <property type="project" value="BHF-UCL"/>
</dbReference>
<dbReference type="GO" id="GO:0003677">
    <property type="term" value="F:DNA binding"/>
    <property type="evidence" value="ECO:0000314"/>
    <property type="project" value="UniProtKB"/>
</dbReference>
<dbReference type="GO" id="GO:0000981">
    <property type="term" value="F:DNA-binding transcription factor activity, RNA polymerase II-specific"/>
    <property type="evidence" value="ECO:0000314"/>
    <property type="project" value="UniProtKB"/>
</dbReference>
<dbReference type="GO" id="GO:0019899">
    <property type="term" value="F:enzyme binding"/>
    <property type="evidence" value="ECO:0000353"/>
    <property type="project" value="UniProtKB"/>
</dbReference>
<dbReference type="GO" id="GO:0004879">
    <property type="term" value="F:nuclear receptor activity"/>
    <property type="evidence" value="ECO:0000314"/>
    <property type="project" value="ParkinsonsUK-UCL"/>
</dbReference>
<dbReference type="GO" id="GO:0005543">
    <property type="term" value="F:phospholipid binding"/>
    <property type="evidence" value="ECO:0000314"/>
    <property type="project" value="UniProtKB"/>
</dbReference>
<dbReference type="GO" id="GO:0000978">
    <property type="term" value="F:RNA polymerase II cis-regulatory region sequence-specific DNA binding"/>
    <property type="evidence" value="ECO:0000250"/>
    <property type="project" value="BHF-UCL"/>
</dbReference>
<dbReference type="GO" id="GO:0000977">
    <property type="term" value="F:RNA polymerase II transcription regulatory region sequence-specific DNA binding"/>
    <property type="evidence" value="ECO:0000314"/>
    <property type="project" value="ParkinsonsUK-UCL"/>
</dbReference>
<dbReference type="GO" id="GO:0043565">
    <property type="term" value="F:sequence-specific DNA binding"/>
    <property type="evidence" value="ECO:0000314"/>
    <property type="project" value="UniProtKB"/>
</dbReference>
<dbReference type="GO" id="GO:1990837">
    <property type="term" value="F:sequence-specific double-stranded DNA binding"/>
    <property type="evidence" value="ECO:0000314"/>
    <property type="project" value="ARUK-UCL"/>
</dbReference>
<dbReference type="GO" id="GO:0001221">
    <property type="term" value="F:transcription coregulator binding"/>
    <property type="evidence" value="ECO:0000353"/>
    <property type="project" value="UniProtKB"/>
</dbReference>
<dbReference type="GO" id="GO:0008270">
    <property type="term" value="F:zinc ion binding"/>
    <property type="evidence" value="ECO:0007669"/>
    <property type="project" value="UniProtKB-KW"/>
</dbReference>
<dbReference type="GO" id="GO:0030325">
    <property type="term" value="P:adrenal gland development"/>
    <property type="evidence" value="ECO:0007669"/>
    <property type="project" value="Ensembl"/>
</dbReference>
<dbReference type="GO" id="GO:0097720">
    <property type="term" value="P:calcineurin-mediated signaling"/>
    <property type="evidence" value="ECO:0007669"/>
    <property type="project" value="Ensembl"/>
</dbReference>
<dbReference type="GO" id="GO:0008585">
    <property type="term" value="P:female gonad development"/>
    <property type="evidence" value="ECO:0000315"/>
    <property type="project" value="UniProtKB"/>
</dbReference>
<dbReference type="GO" id="GO:0042445">
    <property type="term" value="P:hormone metabolic process"/>
    <property type="evidence" value="ECO:0007669"/>
    <property type="project" value="Ensembl"/>
</dbReference>
<dbReference type="GO" id="GO:0009755">
    <property type="term" value="P:hormone-mediated signaling pathway"/>
    <property type="evidence" value="ECO:0000318"/>
    <property type="project" value="GO_Central"/>
</dbReference>
<dbReference type="GO" id="GO:0033327">
    <property type="term" value="P:Leydig cell differentiation"/>
    <property type="evidence" value="ECO:0007669"/>
    <property type="project" value="Ensembl"/>
</dbReference>
<dbReference type="GO" id="GO:0001553">
    <property type="term" value="P:luteinization"/>
    <property type="evidence" value="ECO:0007669"/>
    <property type="project" value="Ensembl"/>
</dbReference>
<dbReference type="GO" id="GO:0051457">
    <property type="term" value="P:maintenance of protein location in nucleus"/>
    <property type="evidence" value="ECO:0007669"/>
    <property type="project" value="Ensembl"/>
</dbReference>
<dbReference type="GO" id="GO:0008584">
    <property type="term" value="P:male gonad development"/>
    <property type="evidence" value="ECO:0000315"/>
    <property type="project" value="UniProtKB"/>
</dbReference>
<dbReference type="GO" id="GO:0030238">
    <property type="term" value="P:male sex determination"/>
    <property type="evidence" value="ECO:0000315"/>
    <property type="project" value="BHF-UCL"/>
</dbReference>
<dbReference type="GO" id="GO:2000195">
    <property type="term" value="P:negative regulation of female gonad development"/>
    <property type="evidence" value="ECO:0007669"/>
    <property type="project" value="Ensembl"/>
</dbReference>
<dbReference type="GO" id="GO:0010628">
    <property type="term" value="P:positive regulation of gene expression"/>
    <property type="evidence" value="ECO:0000314"/>
    <property type="project" value="UniProtKB"/>
</dbReference>
<dbReference type="GO" id="GO:2000020">
    <property type="term" value="P:positive regulation of male gonad development"/>
    <property type="evidence" value="ECO:0000314"/>
    <property type="project" value="UniProtKB"/>
</dbReference>
<dbReference type="GO" id="GO:0045944">
    <property type="term" value="P:positive regulation of transcription by RNA polymerase II"/>
    <property type="evidence" value="ECO:0000315"/>
    <property type="project" value="UniProtKB"/>
</dbReference>
<dbReference type="GO" id="GO:0007538">
    <property type="term" value="P:primary sex determination"/>
    <property type="evidence" value="ECO:0000304"/>
    <property type="project" value="ProtInc"/>
</dbReference>
<dbReference type="GO" id="GO:0050810">
    <property type="term" value="P:regulation of steroid biosynthetic process"/>
    <property type="evidence" value="ECO:0000304"/>
    <property type="project" value="UniProtKB"/>
</dbReference>
<dbReference type="GO" id="GO:0006357">
    <property type="term" value="P:regulation of transcription by RNA polymerase II"/>
    <property type="evidence" value="ECO:0000318"/>
    <property type="project" value="GO_Central"/>
</dbReference>
<dbReference type="GO" id="GO:0097210">
    <property type="term" value="P:response to gonadotropin-releasing hormone"/>
    <property type="evidence" value="ECO:0007669"/>
    <property type="project" value="Ensembl"/>
</dbReference>
<dbReference type="GO" id="GO:0060008">
    <property type="term" value="P:Sertoli cell differentiation"/>
    <property type="evidence" value="ECO:0007669"/>
    <property type="project" value="Ensembl"/>
</dbReference>
<dbReference type="GO" id="GO:0007530">
    <property type="term" value="P:sex determination"/>
    <property type="evidence" value="ECO:0000315"/>
    <property type="project" value="UniProtKB"/>
</dbReference>
<dbReference type="GO" id="GO:0009888">
    <property type="term" value="P:tissue development"/>
    <property type="evidence" value="ECO:0000318"/>
    <property type="project" value="GO_Central"/>
</dbReference>
<dbReference type="GO" id="GO:0006366">
    <property type="term" value="P:transcription by RNA polymerase II"/>
    <property type="evidence" value="ECO:0007669"/>
    <property type="project" value="Ensembl"/>
</dbReference>
<dbReference type="CDD" id="cd07167">
    <property type="entry name" value="NR_DBD_Lrh-1_like"/>
    <property type="match status" value="1"/>
</dbReference>
<dbReference type="CDD" id="cd07070">
    <property type="entry name" value="NR_LBD_SF-1"/>
    <property type="match status" value="1"/>
</dbReference>
<dbReference type="FunFam" id="3.30.50.10:FF:000006">
    <property type="entry name" value="Nuclear receptor subfamily 5 group A member"/>
    <property type="match status" value="1"/>
</dbReference>
<dbReference type="FunFam" id="1.10.565.10:FF:000011">
    <property type="entry name" value="Nuclear receptor subfamily 5, group A, member 2"/>
    <property type="match status" value="1"/>
</dbReference>
<dbReference type="Gene3D" id="3.30.50.10">
    <property type="entry name" value="Erythroid Transcription Factor GATA-1, subunit A"/>
    <property type="match status" value="1"/>
</dbReference>
<dbReference type="Gene3D" id="1.10.565.10">
    <property type="entry name" value="Retinoid X Receptor"/>
    <property type="match status" value="1"/>
</dbReference>
<dbReference type="IDEAL" id="IID00072"/>
<dbReference type="InterPro" id="IPR035500">
    <property type="entry name" value="NHR-like_dom_sf"/>
</dbReference>
<dbReference type="InterPro" id="IPR016355">
    <property type="entry name" value="NR5-like"/>
</dbReference>
<dbReference type="InterPro" id="IPR000536">
    <property type="entry name" value="Nucl_hrmn_rcpt_lig-bd"/>
</dbReference>
<dbReference type="InterPro" id="IPR001723">
    <property type="entry name" value="Nuclear_hrmn_rcpt"/>
</dbReference>
<dbReference type="InterPro" id="IPR001628">
    <property type="entry name" value="Znf_hrmn_rcpt"/>
</dbReference>
<dbReference type="InterPro" id="IPR013088">
    <property type="entry name" value="Znf_NHR/GATA"/>
</dbReference>
<dbReference type="PANTHER" id="PTHR24086">
    <property type="entry name" value="NUCLEAR RECEPTOR SUBFAMILY 5 GROUP A"/>
    <property type="match status" value="1"/>
</dbReference>
<dbReference type="PANTHER" id="PTHR24086:SF24">
    <property type="entry name" value="STEROIDOGENIC FACTOR 1"/>
    <property type="match status" value="1"/>
</dbReference>
<dbReference type="Pfam" id="PF00104">
    <property type="entry name" value="Hormone_recep"/>
    <property type="match status" value="1"/>
</dbReference>
<dbReference type="Pfam" id="PF00105">
    <property type="entry name" value="zf-C4"/>
    <property type="match status" value="1"/>
</dbReference>
<dbReference type="PIRSF" id="PIRSF002530">
    <property type="entry name" value="Nuc_orph_FTZ-F1"/>
    <property type="match status" value="1"/>
</dbReference>
<dbReference type="PRINTS" id="PR00398">
    <property type="entry name" value="STRDHORMONER"/>
</dbReference>
<dbReference type="PRINTS" id="PR00047">
    <property type="entry name" value="STROIDFINGER"/>
</dbReference>
<dbReference type="SMART" id="SM00430">
    <property type="entry name" value="HOLI"/>
    <property type="match status" value="1"/>
</dbReference>
<dbReference type="SMART" id="SM00399">
    <property type="entry name" value="ZnF_C4"/>
    <property type="match status" value="1"/>
</dbReference>
<dbReference type="SUPFAM" id="SSF57716">
    <property type="entry name" value="Glucocorticoid receptor-like (DNA-binding domain)"/>
    <property type="match status" value="1"/>
</dbReference>
<dbReference type="SUPFAM" id="SSF48508">
    <property type="entry name" value="Nuclear receptor ligand-binding domain"/>
    <property type="match status" value="1"/>
</dbReference>
<dbReference type="PROSITE" id="PS51843">
    <property type="entry name" value="NR_LBD"/>
    <property type="match status" value="1"/>
</dbReference>
<dbReference type="PROSITE" id="PS00031">
    <property type="entry name" value="NUCLEAR_REC_DBD_1"/>
    <property type="match status" value="1"/>
</dbReference>
<dbReference type="PROSITE" id="PS51030">
    <property type="entry name" value="NUCLEAR_REC_DBD_2"/>
    <property type="match status" value="1"/>
</dbReference>
<name>STF1_HUMAN</name>
<sequence length="461" mass="51636">MDYSYDEDLDELCPVCGDKVSGYHYGLLTCESCKGFFKRTVQNNKHYTCTESQSCKIDKTQRKRCPFCRFQKCLTVGMRLEAVRADRMRGGRNKFGPMYKRDRALKQQKKAQIRANGFKLETGPPMGVPPPPPPAPDYVLPPSLHGPEPKGLAAGPPAGPLGDFGAPALPMAVPGAHGPLAGYLYPAFPGRAIKSEYPEPYASPPQPGLPYGYPEPFSGGPNVPELILQLLQLEPDEDQVRARILGCLQEPTKSRPDQPAAFGLLCRMADQTFISIVDWARRCMVFKELEVADQMTLLQNCWSELLVFDHIYRQVQHGKEGSILLVTGQEVELTTVATQAGSLLHSLVLRAQELVLQLLALQLDRQEFVCLKFIILFSLDLKFLNNHILVKDAQEKANAALLDYTLCHYPHCGDKFQQLLLCLVEVRALSMQAKEYLYHKHLGNEMPRNNLLIEMLQAKQT</sequence>
<proteinExistence type="evidence at protein level"/>
<organism>
    <name type="scientific">Homo sapiens</name>
    <name type="common">Human</name>
    <dbReference type="NCBI Taxonomy" id="9606"/>
    <lineage>
        <taxon>Eukaryota</taxon>
        <taxon>Metazoa</taxon>
        <taxon>Chordata</taxon>
        <taxon>Craniata</taxon>
        <taxon>Vertebrata</taxon>
        <taxon>Euteleostomi</taxon>
        <taxon>Mammalia</taxon>
        <taxon>Eutheria</taxon>
        <taxon>Euarchontoglires</taxon>
        <taxon>Primates</taxon>
        <taxon>Haplorrhini</taxon>
        <taxon>Catarrhini</taxon>
        <taxon>Hominidae</taxon>
        <taxon>Homo</taxon>
    </lineage>
</organism>